<protein>
    <recommendedName>
        <fullName evidence="1">Queuine tRNA-ribosyltransferase accessory subunit 2</fullName>
    </recommendedName>
    <alternativeName>
        <fullName evidence="1">Queuine tRNA-ribosyltransferase domain-containing protein 1</fullName>
    </alternativeName>
</protein>
<feature type="chain" id="PRO_0000383928" description="Queuine tRNA-ribosyltransferase accessory subunit 2">
    <location>
        <begin position="1"/>
        <end position="376"/>
    </location>
</feature>
<feature type="binding site" evidence="1">
    <location>
        <position position="323"/>
    </location>
    <ligand>
        <name>Zn(2+)</name>
        <dbReference type="ChEBI" id="CHEBI:29105"/>
    </ligand>
</feature>
<feature type="binding site" evidence="1">
    <location>
        <position position="325"/>
    </location>
    <ligand>
        <name>Zn(2+)</name>
        <dbReference type="ChEBI" id="CHEBI:29105"/>
    </ligand>
</feature>
<feature type="binding site" evidence="1">
    <location>
        <position position="328"/>
    </location>
    <ligand>
        <name>Zn(2+)</name>
        <dbReference type="ChEBI" id="CHEBI:29105"/>
    </ligand>
</feature>
<feature type="binding site" evidence="1">
    <location>
        <position position="354"/>
    </location>
    <ligand>
        <name>Zn(2+)</name>
        <dbReference type="ChEBI" id="CHEBI:29105"/>
    </ligand>
</feature>
<sequence length="376" mass="42106">MVKFSIEKKTILGRLGKIDSWGPVDVNHATPSCMTYLRAGHIPHLTWDVAENQLKLSQTPIYQMTLPSLISNAKIIEKFGKGVAKFVGMGALESPAIHLSPFDPLGKLPSGYNDSKSIAIWTANGKVSLDVKTYRNTVNSFGCGSFETLVDYDLPRDAGHKKLLKAVDRTTTFNEQIFKQDEKIDGERIVALGGGFSKYHRRKCAVDIGLAENTAAYTVEFHEFVEGMETDEMEMKELLEETFSPLPPTKLRCISGPFNPKTVLFLVQQGIDLFDSSFAIKLAEEGHAFCLADDYPTSSKYEVVDFKDQEKFADDFTPVFDGCGCYTCTKYTKGYLQHLLNTKELLASILLVIHNMSEYDRMFKLIRKSLENSEGL</sequence>
<dbReference type="EMBL" id="HE601102">
    <property type="protein sequence ID" value="CAP20485.1"/>
    <property type="molecule type" value="Genomic_DNA"/>
</dbReference>
<dbReference type="SMR" id="A8WJ41"/>
<dbReference type="FunCoup" id="A8WJ41">
    <property type="interactions" value="2356"/>
</dbReference>
<dbReference type="STRING" id="6238.A8WJ41"/>
<dbReference type="EnsemblMetazoa" id="CBG23704.1">
    <property type="protein sequence ID" value="CBG23704.1"/>
    <property type="gene ID" value="WBGene00041988"/>
</dbReference>
<dbReference type="KEGG" id="cbr:CBG_23704"/>
<dbReference type="CTD" id="8580647"/>
<dbReference type="WormBase" id="CBG23704">
    <property type="protein sequence ID" value="CBP13190"/>
    <property type="gene ID" value="WBGene00041988"/>
    <property type="gene designation" value="Cbr-tgt-2"/>
</dbReference>
<dbReference type="eggNOG" id="KOG3909">
    <property type="taxonomic scope" value="Eukaryota"/>
</dbReference>
<dbReference type="HOGENOM" id="CLU_037350_0_0_1"/>
<dbReference type="InParanoid" id="A8WJ41"/>
<dbReference type="OMA" id="VPHIAHD"/>
<dbReference type="Proteomes" id="UP000008549">
    <property type="component" value="Unassembled WGS sequence"/>
</dbReference>
<dbReference type="GO" id="GO:0005737">
    <property type="term" value="C:cytoplasm"/>
    <property type="evidence" value="ECO:0007669"/>
    <property type="project" value="UniProtKB-SubCell"/>
</dbReference>
<dbReference type="GO" id="GO:0046872">
    <property type="term" value="F:metal ion binding"/>
    <property type="evidence" value="ECO:0007669"/>
    <property type="project" value="UniProtKB-KW"/>
</dbReference>
<dbReference type="GO" id="GO:0008479">
    <property type="term" value="F:tRNA-guanosine(34) queuine transglycosylase activity"/>
    <property type="evidence" value="ECO:0007669"/>
    <property type="project" value="UniProtKB-UniRule"/>
</dbReference>
<dbReference type="GO" id="GO:0101030">
    <property type="term" value="P:tRNA-guanine transglycosylation"/>
    <property type="evidence" value="ECO:0000318"/>
    <property type="project" value="GO_Central"/>
</dbReference>
<dbReference type="FunFam" id="3.20.20.105:FF:000008">
    <property type="entry name" value="Queuine tRNA-ribosyltransferase accessory subunit 2"/>
    <property type="match status" value="1"/>
</dbReference>
<dbReference type="Gene3D" id="3.20.20.105">
    <property type="entry name" value="Queuine tRNA-ribosyltransferase-like"/>
    <property type="match status" value="1"/>
</dbReference>
<dbReference type="HAMAP" id="MF_03043">
    <property type="entry name" value="QTRT2"/>
    <property type="match status" value="1"/>
</dbReference>
<dbReference type="InterPro" id="IPR028592">
    <property type="entry name" value="QTRTD1"/>
</dbReference>
<dbReference type="InterPro" id="IPR050852">
    <property type="entry name" value="Queuine_tRNA-ribosyltrfase"/>
</dbReference>
<dbReference type="InterPro" id="IPR036511">
    <property type="entry name" value="TGT-like_sf"/>
</dbReference>
<dbReference type="InterPro" id="IPR002616">
    <property type="entry name" value="tRNA_ribo_trans-like"/>
</dbReference>
<dbReference type="NCBIfam" id="TIGR00449">
    <property type="entry name" value="tgt_general"/>
    <property type="match status" value="1"/>
</dbReference>
<dbReference type="PANTHER" id="PTHR46064">
    <property type="entry name" value="QUEUINE TRNA-RIBOSYLTRANSFERASE ACCESSORY SUBUNIT 2"/>
    <property type="match status" value="1"/>
</dbReference>
<dbReference type="PANTHER" id="PTHR46064:SF1">
    <property type="entry name" value="QUEUINE TRNA-RIBOSYLTRANSFERASE ACCESSORY SUBUNIT 2"/>
    <property type="match status" value="1"/>
</dbReference>
<dbReference type="Pfam" id="PF01702">
    <property type="entry name" value="TGT"/>
    <property type="match status" value="1"/>
</dbReference>
<dbReference type="SUPFAM" id="SSF51713">
    <property type="entry name" value="tRNA-guanine transglycosylase"/>
    <property type="match status" value="1"/>
</dbReference>
<comment type="function">
    <text evidence="1">Non-catalytic subunit of the queuine tRNA-ribosyltransferase (TGT) that catalyzes the base-exchange of a guanine (G) residue with queuine (Q) at position 34 (anticodon wobble position) in tRNAs with GU(N) anticodons (tRNA-Asp, -Asn, -His and -Tyr), resulting in the hypermodified nucleoside queuosine (7-(((4,5-cis-dihydroxy-2-cyclopenten-1-yl)amino)methyl)-7-deazaguanosine).</text>
</comment>
<comment type="cofactor">
    <cofactor evidence="1">
        <name>Zn(2+)</name>
        <dbReference type="ChEBI" id="CHEBI:29105"/>
    </cofactor>
    <text evidence="1">Binds 1 zinc ion per subunit.</text>
</comment>
<comment type="subunit">
    <text evidence="1">Heterodimer of a catalytic subunit and an accessory subunit.</text>
</comment>
<comment type="subcellular location">
    <subcellularLocation>
        <location evidence="1">Cytoplasm</location>
    </subcellularLocation>
</comment>
<comment type="similarity">
    <text evidence="1">Belongs to the queuine tRNA-ribosyltransferase family. QTRT2 subfamily.</text>
</comment>
<name>QTRT2_CAEBR</name>
<proteinExistence type="inferred from homology"/>
<gene>
    <name evidence="1" type="primary">tgt-2</name>
    <name type="ORF">CBG23704</name>
</gene>
<keyword id="KW-0963">Cytoplasm</keyword>
<keyword id="KW-0479">Metal-binding</keyword>
<keyword id="KW-1185">Reference proteome</keyword>
<keyword id="KW-0819">tRNA processing</keyword>
<keyword id="KW-0862">Zinc</keyword>
<reference key="1">
    <citation type="journal article" date="2003" name="PLoS Biol.">
        <title>The genome sequence of Caenorhabditis briggsae: a platform for comparative genomics.</title>
        <authorList>
            <person name="Stein L.D."/>
            <person name="Bao Z."/>
            <person name="Blasiar D."/>
            <person name="Blumenthal T."/>
            <person name="Brent M.R."/>
            <person name="Chen N."/>
            <person name="Chinwalla A."/>
            <person name="Clarke L."/>
            <person name="Clee C."/>
            <person name="Coghlan A."/>
            <person name="Coulson A."/>
            <person name="D'Eustachio P."/>
            <person name="Fitch D.H.A."/>
            <person name="Fulton L.A."/>
            <person name="Fulton R.E."/>
            <person name="Griffiths-Jones S."/>
            <person name="Harris T.W."/>
            <person name="Hillier L.W."/>
            <person name="Kamath R."/>
            <person name="Kuwabara P.E."/>
            <person name="Mardis E.R."/>
            <person name="Marra M.A."/>
            <person name="Miner T.L."/>
            <person name="Minx P."/>
            <person name="Mullikin J.C."/>
            <person name="Plumb R.W."/>
            <person name="Rogers J."/>
            <person name="Schein J.E."/>
            <person name="Sohrmann M."/>
            <person name="Spieth J."/>
            <person name="Stajich J.E."/>
            <person name="Wei C."/>
            <person name="Willey D."/>
            <person name="Wilson R.K."/>
            <person name="Durbin R.M."/>
            <person name="Waterston R.H."/>
        </authorList>
    </citation>
    <scope>NUCLEOTIDE SEQUENCE [LARGE SCALE GENOMIC DNA]</scope>
    <source>
        <strain>AF16</strain>
    </source>
</reference>
<organism>
    <name type="scientific">Caenorhabditis briggsae</name>
    <dbReference type="NCBI Taxonomy" id="6238"/>
    <lineage>
        <taxon>Eukaryota</taxon>
        <taxon>Metazoa</taxon>
        <taxon>Ecdysozoa</taxon>
        <taxon>Nematoda</taxon>
        <taxon>Chromadorea</taxon>
        <taxon>Rhabditida</taxon>
        <taxon>Rhabditina</taxon>
        <taxon>Rhabditomorpha</taxon>
        <taxon>Rhabditoidea</taxon>
        <taxon>Rhabditidae</taxon>
        <taxon>Peloderinae</taxon>
        <taxon>Caenorhabditis</taxon>
    </lineage>
</organism>
<evidence type="ECO:0000255" key="1">
    <source>
        <dbReference type="HAMAP-Rule" id="MF_03043"/>
    </source>
</evidence>
<accession>A8WJ41</accession>